<proteinExistence type="inferred from homology"/>
<dbReference type="EMBL" id="CP000112">
    <property type="protein sequence ID" value="ABB38211.1"/>
    <property type="molecule type" value="Genomic_DNA"/>
</dbReference>
<dbReference type="RefSeq" id="WP_011367383.1">
    <property type="nucleotide sequence ID" value="NC_007519.1"/>
</dbReference>
<dbReference type="SMR" id="Q312D5"/>
<dbReference type="STRING" id="207559.Dde_1412"/>
<dbReference type="KEGG" id="dde:Dde_1412"/>
<dbReference type="eggNOG" id="COG0360">
    <property type="taxonomic scope" value="Bacteria"/>
</dbReference>
<dbReference type="HOGENOM" id="CLU_113441_5_1_7"/>
<dbReference type="Proteomes" id="UP000002710">
    <property type="component" value="Chromosome"/>
</dbReference>
<dbReference type="GO" id="GO:0005737">
    <property type="term" value="C:cytoplasm"/>
    <property type="evidence" value="ECO:0007669"/>
    <property type="project" value="UniProtKB-ARBA"/>
</dbReference>
<dbReference type="GO" id="GO:1990904">
    <property type="term" value="C:ribonucleoprotein complex"/>
    <property type="evidence" value="ECO:0007669"/>
    <property type="project" value="UniProtKB-KW"/>
</dbReference>
<dbReference type="GO" id="GO:0005840">
    <property type="term" value="C:ribosome"/>
    <property type="evidence" value="ECO:0007669"/>
    <property type="project" value="UniProtKB-KW"/>
</dbReference>
<dbReference type="GO" id="GO:0070181">
    <property type="term" value="F:small ribosomal subunit rRNA binding"/>
    <property type="evidence" value="ECO:0007669"/>
    <property type="project" value="TreeGrafter"/>
</dbReference>
<dbReference type="GO" id="GO:0003735">
    <property type="term" value="F:structural constituent of ribosome"/>
    <property type="evidence" value="ECO:0007669"/>
    <property type="project" value="InterPro"/>
</dbReference>
<dbReference type="GO" id="GO:0006412">
    <property type="term" value="P:translation"/>
    <property type="evidence" value="ECO:0007669"/>
    <property type="project" value="UniProtKB-UniRule"/>
</dbReference>
<dbReference type="CDD" id="cd00473">
    <property type="entry name" value="bS6"/>
    <property type="match status" value="1"/>
</dbReference>
<dbReference type="Gene3D" id="3.30.70.60">
    <property type="match status" value="1"/>
</dbReference>
<dbReference type="HAMAP" id="MF_00360">
    <property type="entry name" value="Ribosomal_bS6"/>
    <property type="match status" value="1"/>
</dbReference>
<dbReference type="InterPro" id="IPR000529">
    <property type="entry name" value="Ribosomal_bS6"/>
</dbReference>
<dbReference type="InterPro" id="IPR035980">
    <property type="entry name" value="Ribosomal_bS6_sf"/>
</dbReference>
<dbReference type="InterPro" id="IPR020814">
    <property type="entry name" value="Ribosomal_S6_plastid/chlpt"/>
</dbReference>
<dbReference type="InterPro" id="IPR014717">
    <property type="entry name" value="Transl_elong_EF1B/ribsomal_bS6"/>
</dbReference>
<dbReference type="NCBIfam" id="TIGR00166">
    <property type="entry name" value="S6"/>
    <property type="match status" value="1"/>
</dbReference>
<dbReference type="PANTHER" id="PTHR21011">
    <property type="entry name" value="MITOCHONDRIAL 28S RIBOSOMAL PROTEIN S6"/>
    <property type="match status" value="1"/>
</dbReference>
<dbReference type="PANTHER" id="PTHR21011:SF1">
    <property type="entry name" value="SMALL RIBOSOMAL SUBUNIT PROTEIN BS6M"/>
    <property type="match status" value="1"/>
</dbReference>
<dbReference type="Pfam" id="PF01250">
    <property type="entry name" value="Ribosomal_S6"/>
    <property type="match status" value="1"/>
</dbReference>
<dbReference type="SUPFAM" id="SSF54995">
    <property type="entry name" value="Ribosomal protein S6"/>
    <property type="match status" value="1"/>
</dbReference>
<gene>
    <name evidence="1" type="primary">rpsF</name>
    <name type="ordered locus">Dde_1412</name>
</gene>
<sequence length="101" mass="11432">MRKFETLLLLSPELGSQPREDLLAVLTGVIEREQGSVLAVDHWGMRDLAYPVRKHMRGYYVRLEYAVAGPSVAELERIIRITDGIYKFVTVKLADEAEEAA</sequence>
<keyword id="KW-1185">Reference proteome</keyword>
<keyword id="KW-0687">Ribonucleoprotein</keyword>
<keyword id="KW-0689">Ribosomal protein</keyword>
<keyword id="KW-0694">RNA-binding</keyword>
<keyword id="KW-0699">rRNA-binding</keyword>
<comment type="function">
    <text evidence="1">Binds together with bS18 to 16S ribosomal RNA.</text>
</comment>
<comment type="similarity">
    <text evidence="1">Belongs to the bacterial ribosomal protein bS6 family.</text>
</comment>
<organism>
    <name type="scientific">Oleidesulfovibrio alaskensis (strain ATCC BAA-1058 / DSM 17464 / G20)</name>
    <name type="common">Desulfovibrio alaskensis</name>
    <dbReference type="NCBI Taxonomy" id="207559"/>
    <lineage>
        <taxon>Bacteria</taxon>
        <taxon>Pseudomonadati</taxon>
        <taxon>Thermodesulfobacteriota</taxon>
        <taxon>Desulfovibrionia</taxon>
        <taxon>Desulfovibrionales</taxon>
        <taxon>Desulfovibrionaceae</taxon>
        <taxon>Oleidesulfovibrio</taxon>
    </lineage>
</organism>
<evidence type="ECO:0000255" key="1">
    <source>
        <dbReference type="HAMAP-Rule" id="MF_00360"/>
    </source>
</evidence>
<evidence type="ECO:0000305" key="2"/>
<reference key="1">
    <citation type="journal article" date="2011" name="J. Bacteriol.">
        <title>Complete genome sequence and updated annotation of Desulfovibrio alaskensis G20.</title>
        <authorList>
            <person name="Hauser L.J."/>
            <person name="Land M.L."/>
            <person name="Brown S.D."/>
            <person name="Larimer F."/>
            <person name="Keller K.L."/>
            <person name="Rapp-Giles B.J."/>
            <person name="Price M.N."/>
            <person name="Lin M."/>
            <person name="Bruce D.C."/>
            <person name="Detter J.C."/>
            <person name="Tapia R."/>
            <person name="Han C.S."/>
            <person name="Goodwin L.A."/>
            <person name="Cheng J.F."/>
            <person name="Pitluck S."/>
            <person name="Copeland A."/>
            <person name="Lucas S."/>
            <person name="Nolan M."/>
            <person name="Lapidus A.L."/>
            <person name="Palumbo A.V."/>
            <person name="Wall J.D."/>
        </authorList>
    </citation>
    <scope>NUCLEOTIDE SEQUENCE [LARGE SCALE GENOMIC DNA]</scope>
    <source>
        <strain>ATCC BAA-1058 / DSM 17464 / G20</strain>
    </source>
</reference>
<protein>
    <recommendedName>
        <fullName evidence="1">Small ribosomal subunit protein bS6</fullName>
    </recommendedName>
    <alternativeName>
        <fullName evidence="2">30S ribosomal protein S6</fullName>
    </alternativeName>
</protein>
<accession>Q312D5</accession>
<feature type="chain" id="PRO_0000229539" description="Small ribosomal subunit protein bS6">
    <location>
        <begin position="1"/>
        <end position="101"/>
    </location>
</feature>
<name>RS6_OLEA2</name>